<dbReference type="EMBL" id="AP008232">
    <property type="protein sequence ID" value="BAE73682.1"/>
    <property type="molecule type" value="Genomic_DNA"/>
</dbReference>
<dbReference type="RefSeq" id="WP_011410270.1">
    <property type="nucleotide sequence ID" value="NC_007712.1"/>
</dbReference>
<dbReference type="SMR" id="Q2NVZ3"/>
<dbReference type="KEGG" id="sgl:SG0407"/>
<dbReference type="eggNOG" id="COG3022">
    <property type="taxonomic scope" value="Bacteria"/>
</dbReference>
<dbReference type="HOGENOM" id="CLU_061989_0_0_6"/>
<dbReference type="OrthoDB" id="9777133at2"/>
<dbReference type="BioCyc" id="SGLO343509:SGP1_RS03770-MONOMER"/>
<dbReference type="Proteomes" id="UP000001932">
    <property type="component" value="Chromosome"/>
</dbReference>
<dbReference type="GO" id="GO:0005829">
    <property type="term" value="C:cytosol"/>
    <property type="evidence" value="ECO:0007669"/>
    <property type="project" value="TreeGrafter"/>
</dbReference>
<dbReference type="GO" id="GO:0033194">
    <property type="term" value="P:response to hydroperoxide"/>
    <property type="evidence" value="ECO:0007669"/>
    <property type="project" value="TreeGrafter"/>
</dbReference>
<dbReference type="HAMAP" id="MF_00652">
    <property type="entry name" value="UPF0246"/>
    <property type="match status" value="1"/>
</dbReference>
<dbReference type="InterPro" id="IPR005583">
    <property type="entry name" value="YaaA"/>
</dbReference>
<dbReference type="NCBIfam" id="NF002541">
    <property type="entry name" value="PRK02101.1-1"/>
    <property type="match status" value="1"/>
</dbReference>
<dbReference type="NCBIfam" id="NF002542">
    <property type="entry name" value="PRK02101.1-3"/>
    <property type="match status" value="1"/>
</dbReference>
<dbReference type="PANTHER" id="PTHR30283:SF4">
    <property type="entry name" value="PEROXIDE STRESS RESISTANCE PROTEIN YAAA"/>
    <property type="match status" value="1"/>
</dbReference>
<dbReference type="PANTHER" id="PTHR30283">
    <property type="entry name" value="PEROXIDE STRESS RESPONSE PROTEIN YAAA"/>
    <property type="match status" value="1"/>
</dbReference>
<dbReference type="Pfam" id="PF03883">
    <property type="entry name" value="H2O2_YaaD"/>
    <property type="match status" value="1"/>
</dbReference>
<name>Y407_SODGM</name>
<proteinExistence type="inferred from homology"/>
<organism>
    <name type="scientific">Sodalis glossinidius (strain morsitans)</name>
    <dbReference type="NCBI Taxonomy" id="343509"/>
    <lineage>
        <taxon>Bacteria</taxon>
        <taxon>Pseudomonadati</taxon>
        <taxon>Pseudomonadota</taxon>
        <taxon>Gammaproteobacteria</taxon>
        <taxon>Enterobacterales</taxon>
        <taxon>Bruguierivoracaceae</taxon>
        <taxon>Sodalis</taxon>
    </lineage>
</organism>
<gene>
    <name type="ordered locus">SG0407</name>
</gene>
<sequence length="259" mass="28987">MLIVISPAKTLDFQSPLATRRYTQPELLPQSAALIDLCRKLTPARISTLMGISDKLADLNAARFQAWQTPFTPDNARQAILAFKGDVYTGLAAETFSEAQFDFAQRHLRMLSGLYGVLRPLDLMQPYRLEMGIRLANPAGASLYHYWGTMLTDKLNQALAEQGDTLVINLASDEYFRAVQPARINGRVIKPVFLDEKNGQYKVISFNAKKARGMMSRCIITEALTQPEQLKAFDAGGYRFDAAASSDNEWVFKRLQQDG</sequence>
<reference key="1">
    <citation type="journal article" date="2006" name="Genome Res.">
        <title>Massive genome erosion and functional adaptations provide insights into the symbiotic lifestyle of Sodalis glossinidius in the tsetse host.</title>
        <authorList>
            <person name="Toh H."/>
            <person name="Weiss B.L."/>
            <person name="Perkin S.A.H."/>
            <person name="Yamashita A."/>
            <person name="Oshima K."/>
            <person name="Hattori M."/>
            <person name="Aksoy S."/>
        </authorList>
    </citation>
    <scope>NUCLEOTIDE SEQUENCE [LARGE SCALE GENOMIC DNA]</scope>
    <source>
        <strain>morsitans</strain>
    </source>
</reference>
<feature type="chain" id="PRO_0000262065" description="UPF0246 protein SG0407">
    <location>
        <begin position="1"/>
        <end position="259"/>
    </location>
</feature>
<evidence type="ECO:0000255" key="1">
    <source>
        <dbReference type="HAMAP-Rule" id="MF_00652"/>
    </source>
</evidence>
<accession>Q2NVZ3</accession>
<comment type="similarity">
    <text evidence="1">Belongs to the UPF0246 family.</text>
</comment>
<protein>
    <recommendedName>
        <fullName evidence="1">UPF0246 protein SG0407</fullName>
    </recommendedName>
</protein>